<keyword id="KW-0002">3D-structure</keyword>
<keyword id="KW-0963">Cytoplasm</keyword>
<keyword id="KW-0653">Protein transport</keyword>
<keyword id="KW-1185">Reference proteome</keyword>
<keyword id="KW-0813">Transport</keyword>
<keyword id="KW-0843">Virulence</keyword>
<dbReference type="EMBL" id="AE017354">
    <property type="protein sequence ID" value="AAU26539.1"/>
    <property type="molecule type" value="Genomic_DNA"/>
</dbReference>
<dbReference type="RefSeq" id="WP_010946191.1">
    <property type="nucleotide sequence ID" value="NC_002942.5"/>
</dbReference>
<dbReference type="RefSeq" id="YP_094486.1">
    <property type="nucleotide sequence ID" value="NC_002942.5"/>
</dbReference>
<dbReference type="PDB" id="5X1E">
    <property type="method" value="X-ray"/>
    <property type="resolution" value="2.00 A"/>
    <property type="chains" value="A=5-114, D=4-114"/>
</dbReference>
<dbReference type="PDB" id="5X90">
    <property type="method" value="X-ray"/>
    <property type="resolution" value="2.80 A"/>
    <property type="chains" value="A/E=1-114"/>
</dbReference>
<dbReference type="PDB" id="5XNB">
    <property type="method" value="X-ray"/>
    <property type="resolution" value="2.59 A"/>
    <property type="chains" value="B/E/H/K/N/Q=1-114"/>
</dbReference>
<dbReference type="PDB" id="7BWK">
    <property type="method" value="X-ray"/>
    <property type="resolution" value="2.80 A"/>
    <property type="chains" value="B/G=1-114"/>
</dbReference>
<dbReference type="PDBsum" id="5X1E"/>
<dbReference type="PDBsum" id="5X90"/>
<dbReference type="PDBsum" id="5XNB"/>
<dbReference type="PDBsum" id="7BWK"/>
<dbReference type="SMR" id="Q5ZYD0"/>
<dbReference type="STRING" id="272624.lpg0442"/>
<dbReference type="TCDB" id="3.A.7.9.1">
    <property type="family name" value="the type iv (conjugal dna-protein transfer or virb) secretory pathway (ivsp) family"/>
</dbReference>
<dbReference type="PaxDb" id="272624-lpg0442"/>
<dbReference type="GeneID" id="57034444"/>
<dbReference type="KEGG" id="lpn:lpg0442"/>
<dbReference type="PATRIC" id="fig|272624.6.peg.458"/>
<dbReference type="eggNOG" id="ENOG5033ZWY">
    <property type="taxonomic scope" value="Bacteria"/>
</dbReference>
<dbReference type="HOGENOM" id="CLU_2119949_0_0_6"/>
<dbReference type="OrthoDB" id="5640644at2"/>
<dbReference type="Proteomes" id="UP000000609">
    <property type="component" value="Chromosome"/>
</dbReference>
<dbReference type="GO" id="GO:0005737">
    <property type="term" value="C:cytoplasm"/>
    <property type="evidence" value="ECO:0007669"/>
    <property type="project" value="UniProtKB-SubCell"/>
</dbReference>
<dbReference type="GO" id="GO:0015031">
    <property type="term" value="P:protein transport"/>
    <property type="evidence" value="ECO:0007669"/>
    <property type="project" value="UniProtKB-KW"/>
</dbReference>
<dbReference type="InterPro" id="IPR022250">
    <property type="entry name" value="T4bSS_IcmS"/>
</dbReference>
<dbReference type="Pfam" id="PF12608">
    <property type="entry name" value="T4bSS_IcmS"/>
    <property type="match status" value="1"/>
</dbReference>
<accession>Q5ZYD0</accession>
<comment type="function">
    <text evidence="1 2 4 5 6 7 9 11">Component of the Dot/Icm type IVB secretion system (T4BSS), which is used to inject bacterial effector proteins into eukaryotic host cells (PubMed:15661013, PubMed:17040490, PubMed:18069892, PubMed:22694730, PubMed:32513920). Part of a subcomplex which recruits effector proteins and delivers them to the core transmembrane subcomplex (PubMed:23028312, PubMed:32513920). The IcmS/IcmW protein complex plays an important role in protein translocation by interacting with multiple Dot/Icm effector proteins to facilitate their translocation into host cells (PubMed:15661013, PubMed:18069892). Interaction promotes conformational changes in the effector protein, which may facilitate display of a C-terminal translocation signal (PubMed:18069892). May maintain the substrates in a translocation competent form (PubMed:23028312). Required for intracellular growth in host cells, replicative phagosome formation and phagosome trafficking (PubMed:11115108). IcmS is required for IcmW stability (PubMed:15661013, PubMed:29203674).</text>
</comment>
<comment type="activity regulation">
    <text evidence="7">Interaction with DotL is critical for the export of IcmSW-dependent substrates.</text>
</comment>
<comment type="subunit">
    <text evidence="1 2 3 4 5 6 7 8 9 10 11">The T4BSS is a complex nanomachine composed of several subcomplexes. This subunit is part of the Type IV Coupling Complex (T4CC), a subcomplex composed of the DotLMNYZ core and the IcmSW-LvgA adapter subunits, linked by the C-terminal tail of DotL (PubMed:17040490, PubMed:22694730, PubMed:28714967, PubMed:32457311, PubMed:32513920). Interacts with IcmW (PubMed:11115108, PubMed:15661013, PubMed:29203674). IcmS and IcmW form a stable complex (PubMed:15661013). Interacts directly with the type 4 coupling protein DotL (PubMed:23028312, PubMed:29203674, PubMed:32513920). Interacts with LvgA (PubMed:16803597, PubMed:29203674). Interacts with effector proteins (PubMed:18069892, PubMed:29203674).</text>
</comment>
<comment type="subcellular location">
    <subcellularLocation>
        <location evidence="1 2 4">Cytoplasm</location>
    </subcellularLocation>
    <text evidence="6 7">Associates with the inner membrane at the poles in a DotL/DotM/DotN-dependent manner.</text>
</comment>
<comment type="disruption phenotype">
    <text evidence="1 2 4 5">Deletion of the gene leads to a strong decrease in intracellular growth in human monocytes (PubMed:11115108). Mutant is unable to evade phagosome lysosome fusion, but retains the pore-forming activity (PubMed:11115108). Mutation severely impairs the translocation into host cells of multiple effector proteins, including SidA, SidB, SidC, SidD, SidE, SidG, SidH, WipA and WipB (PubMed:15661013, PubMed:18069892). Loss of this gene has a profound effect on the levels of IcmW (PubMed:17040490).</text>
</comment>
<feature type="chain" id="PRO_0000455595" description="Type 4 adapter protein IcmS">
    <location>
        <begin position="1"/>
        <end position="114"/>
    </location>
</feature>
<feature type="helix" evidence="20">
    <location>
        <begin position="6"/>
        <end position="15"/>
    </location>
</feature>
<feature type="strand" evidence="20">
    <location>
        <begin position="20"/>
        <end position="22"/>
    </location>
</feature>
<feature type="strand" evidence="20">
    <location>
        <begin position="25"/>
        <end position="27"/>
    </location>
</feature>
<feature type="helix" evidence="20">
    <location>
        <begin position="29"/>
        <end position="32"/>
    </location>
</feature>
<feature type="turn" evidence="20">
    <location>
        <begin position="35"/>
        <end position="38"/>
    </location>
</feature>
<feature type="helix" evidence="20">
    <location>
        <begin position="39"/>
        <end position="54"/>
    </location>
</feature>
<feature type="strand" evidence="20">
    <location>
        <begin position="60"/>
        <end position="64"/>
    </location>
</feature>
<feature type="strand" evidence="20">
    <location>
        <begin position="68"/>
        <end position="76"/>
    </location>
</feature>
<feature type="strand" evidence="20">
    <location>
        <begin position="78"/>
        <end position="80"/>
    </location>
</feature>
<feature type="helix" evidence="20">
    <location>
        <begin position="82"/>
        <end position="99"/>
    </location>
</feature>
<feature type="strand" evidence="20">
    <location>
        <begin position="100"/>
        <end position="102"/>
    </location>
</feature>
<feature type="strand" evidence="20">
    <location>
        <begin position="105"/>
        <end position="107"/>
    </location>
</feature>
<feature type="helix" evidence="20">
    <location>
        <begin position="109"/>
        <end position="113"/>
    </location>
</feature>
<protein>
    <recommendedName>
        <fullName evidence="14">Type 4 adapter protein IcmS</fullName>
    </recommendedName>
    <alternativeName>
        <fullName evidence="14">Intracellular multiplication protein S</fullName>
    </alternativeName>
    <alternativeName>
        <fullName evidence="13">Secretion adapter protein IcmS</fullName>
    </alternativeName>
</protein>
<reference key="1">
    <citation type="journal article" date="2004" name="Science">
        <title>The genomic sequence of the accidental pathogen Legionella pneumophila.</title>
        <authorList>
            <person name="Chien M."/>
            <person name="Morozova I."/>
            <person name="Shi S."/>
            <person name="Sheng H."/>
            <person name="Chen J."/>
            <person name="Gomez S.M."/>
            <person name="Asamani G."/>
            <person name="Hill K."/>
            <person name="Nuara J."/>
            <person name="Feder M."/>
            <person name="Rineer J."/>
            <person name="Greenberg J.J."/>
            <person name="Steshenko V."/>
            <person name="Park S.H."/>
            <person name="Zhao B."/>
            <person name="Teplitskaya E."/>
            <person name="Edwards J.R."/>
            <person name="Pampou S."/>
            <person name="Georghiou A."/>
            <person name="Chou I.-C."/>
            <person name="Iannuccilli W."/>
            <person name="Ulz M.E."/>
            <person name="Kim D.H."/>
            <person name="Geringer-Sameth A."/>
            <person name="Goldsberry C."/>
            <person name="Morozov P."/>
            <person name="Fischer S.G."/>
            <person name="Segal G."/>
            <person name="Qu X."/>
            <person name="Rzhetsky A."/>
            <person name="Zhang P."/>
            <person name="Cayanis E."/>
            <person name="De Jong P.J."/>
            <person name="Ju J."/>
            <person name="Kalachikov S."/>
            <person name="Shuman H.A."/>
            <person name="Russo J.J."/>
        </authorList>
    </citation>
    <scope>NUCLEOTIDE SEQUENCE [LARGE SCALE GENOMIC DNA]</scope>
    <source>
        <strain>Philadelphia 1 / ATCC 33152 / DSM 7513</strain>
    </source>
</reference>
<reference key="2">
    <citation type="journal article" date="2000" name="Mol. Microbiol.">
        <title>Identification of Icm protein complexes that play distinct roles in the biogenesis of an organelle permissive for Legionella pneumophila intracellular growth.</title>
        <authorList>
            <person name="Coers J."/>
            <person name="Kagan J.C."/>
            <person name="Matthews M."/>
            <person name="Nagai H."/>
            <person name="Zuckman D.M."/>
            <person name="Roy C.R."/>
        </authorList>
    </citation>
    <scope>FUNCTION</scope>
    <scope>INTERACTION WITH ICMW</scope>
    <scope>SUBCELLULAR LOCATION</scope>
    <scope>DISRUPTION PHENOTYPE</scope>
    <source>
        <strain>Philadelphia 1 / Lp01</strain>
    </source>
</reference>
<reference key="3">
    <citation type="journal article" date="2005" name="Mol. Microbiol.">
        <title>The Legionella IcmS-IcmW protein complex is important for Dot/Icm-mediated protein translocation.</title>
        <authorList>
            <person name="Ninio S."/>
            <person name="Zuckman-Cholon D.M."/>
            <person name="Cambronne E.D."/>
            <person name="Roy C.R."/>
        </authorList>
    </citation>
    <scope>FUNCTION</scope>
    <scope>INTERACTION WITH ICMW</scope>
    <scope>SUBCELLULAR LOCATION</scope>
    <scope>DISRUPTION PHENOTYPE</scope>
    <source>
        <strain>Philadelphia 1 / Lp01</strain>
    </source>
</reference>
<reference key="4">
    <citation type="journal article" date="2006" name="Mol. Microbiol.">
        <title>The Legionella pneumophila IcmS-LvgA protein complex is important for Dot/Icm-dependent intracellular growth.</title>
        <authorList>
            <person name="Vincent C.D."/>
            <person name="Vogel J.P."/>
        </authorList>
    </citation>
    <scope>INTERACTION WITH LVGA</scope>
    <source>
        <strain>Philadelphia 1 / Lp02</strain>
    </source>
</reference>
<reference key="5">
    <citation type="journal article" date="2006" name="Mol. Microbiol.">
        <title>Identification of the core transmembrane complex of the Legionella Dot/Icm type IV secretion system.</title>
        <authorList>
            <person name="Vincent C.D."/>
            <person name="Friedman J.R."/>
            <person name="Jeong K.C."/>
            <person name="Buford E.C."/>
            <person name="Miller J.L."/>
            <person name="Vogel J.P."/>
        </authorList>
    </citation>
    <scope>FUNCTION</scope>
    <scope>SUBUNIT</scope>
    <scope>SUBCELLULAR LOCATION</scope>
    <scope>DISRUPTION PHENOTYPE</scope>
    <source>
        <strain>Philadelphia 1 / Lp02</strain>
    </source>
</reference>
<reference key="6">
    <citation type="journal article" date="2007" name="PLoS Pathog.">
        <title>The Legionella pneumophila IcmSW complex interacts with multiple Dot/Icm effectors to facilitate type IV translocation.</title>
        <authorList>
            <person name="Cambronne E.D."/>
            <person name="Roy C.R."/>
        </authorList>
    </citation>
    <scope>FUNCTION</scope>
    <scope>INTERACTION WITH EFFECTOR PROTEINS</scope>
    <scope>DISRUPTION PHENOTYPE</scope>
    <source>
        <strain>Philadelphia 1 / Lp01</strain>
    </source>
</reference>
<reference key="7">
    <citation type="journal article" date="2012" name="Mol. Microbiol.">
        <title>Identification of the DotL coupling protein subcomplex of the Legionella Dot/Icm type IV secretion system.</title>
        <authorList>
            <person name="Vincent C.D."/>
            <person name="Friedman J.R."/>
            <person name="Jeong K.C."/>
            <person name="Sutherland M.C."/>
            <person name="Vogel J.P."/>
        </authorList>
    </citation>
    <scope>FUNCTION</scope>
    <scope>SUBUNIT</scope>
    <scope>SUBCELLULAR LOCATION</scope>
    <source>
        <strain>Philadelphia 1 / Lp02</strain>
    </source>
</reference>
<reference key="8">
    <citation type="journal article" date="2012" name="PLoS Pathog.">
        <title>The Legionella IcmSW complex directly interacts with DotL to mediate translocation of adaptor-dependent substrates.</title>
        <authorList>
            <person name="Sutherland M.C."/>
            <person name="Nguyen T.L."/>
            <person name="Tseng V."/>
            <person name="Vogel J.P."/>
        </authorList>
    </citation>
    <scope>FUNCTION</scope>
    <scope>ACTIVITY REGULATION</scope>
    <scope>INTERACTION WITH DOTL</scope>
    <scope>SUBCELLULAR LOCATION</scope>
    <source>
        <strain>Philadelphia 1 / Lp02</strain>
    </source>
</reference>
<reference key="9">
    <citation type="journal article" date="2020" name="Nat. Commun.">
        <title>Mechanism of effector capture and delivery by the type IV secretion system from Legionella pneumophila.</title>
        <authorList>
            <person name="Meir A."/>
            <person name="Mace K."/>
            <person name="Lukoyanova N."/>
            <person name="Chetrit D."/>
            <person name="Hospenthal M.K."/>
            <person name="Redzej A."/>
            <person name="Roy C."/>
            <person name="Waksman G."/>
        </authorList>
    </citation>
    <scope>FUNCTION</scope>
    <scope>SUBUNIT</scope>
    <source>
        <strain>Philadelphia 1 / Lp01</strain>
    </source>
</reference>
<reference evidence="16 17" key="10">
    <citation type="journal article" date="2017" name="Nat. Microbiol.">
        <title>Architecture of the type IV coupling protein complex of Legionella pneumophila.</title>
        <authorList>
            <person name="Kwak M.J."/>
            <person name="Kim J.D."/>
            <person name="Kim H."/>
            <person name="Kim C."/>
            <person name="Bowman J.W."/>
            <person name="Kim S."/>
            <person name="Joo K."/>
            <person name="Lee J."/>
            <person name="Jin K.S."/>
            <person name="Kim Y.G."/>
            <person name="Lee N.K."/>
            <person name="Jung J.U."/>
            <person name="Oh B.H."/>
        </authorList>
    </citation>
    <scope>X-RAY CRYSTALLOGRAPHY (2.00 ANGSTROMS) OF 4-114 IN COMPLEXES WITH DOTL; ICMW AND LVGA</scope>
    <scope>SUBUNIT</scope>
    <source>
        <strain>Philadelphia 1 / ATCC 33152 / DSM 7513</strain>
    </source>
</reference>
<reference evidence="18" key="11">
    <citation type="journal article" date="2017" name="Proc. Natl. Acad. Sci. U.S.A.">
        <title>Structural insights into the roles of the IcmS-IcmW complex in the type IVb secretion system of Legionella pneumophila.</title>
        <authorList>
            <person name="Xu J."/>
            <person name="Xu D."/>
            <person name="Wan M."/>
            <person name="Yin L."/>
            <person name="Wang X."/>
            <person name="Wu L."/>
            <person name="Liu Y."/>
            <person name="Liu X."/>
            <person name="Zhou Y."/>
            <person name="Zhu Y."/>
        </authorList>
    </citation>
    <scope>X-RAY CRYSTALLOGRAPHY (2.59 ANGSTROMS) IN COMPLEX WITH DOTL AND ICMW</scope>
    <scope>FUNCTION</scope>
    <scope>SUBUNIT</scope>
    <scope>INTERACTION WITH LVGA</scope>
</reference>
<reference evidence="19" key="12">
    <citation type="journal article" date="2020" name="Nat. Commun.">
        <title>Structural basis for effector protein recognition by the Dot/Icm Type IVB coupling protein complex.</title>
        <authorList>
            <person name="Kim H."/>
            <person name="Kubori T."/>
            <person name="Yamazaki K."/>
            <person name="Kwak M.J."/>
            <person name="Park S.Y."/>
            <person name="Nagai H."/>
            <person name="Vogel J.P."/>
            <person name="Oh B.H."/>
        </authorList>
    </citation>
    <scope>X-RAY CRYSTALLOGRAPHY (2.80 ANGSTROMS) IN COMPLEX WITH DOTL; ICMW; LVGA AND VPDB</scope>
    <scope>SUBUNIT</scope>
</reference>
<sequence length="114" mass="12673">MERDISKCMAKIAASMNAKFYLNDRFVSFDEVFSETGLLPAIAKRADQLCSLCLGYGLGATYDESEGALLGIRVVFDEVTPNVLRLLCMTDVMNELIQGGPSRDYTPLDELMYD</sequence>
<evidence type="ECO:0000269" key="1">
    <source>
    </source>
</evidence>
<evidence type="ECO:0000269" key="2">
    <source>
    </source>
</evidence>
<evidence type="ECO:0000269" key="3">
    <source>
    </source>
</evidence>
<evidence type="ECO:0000269" key="4">
    <source>
    </source>
</evidence>
<evidence type="ECO:0000269" key="5">
    <source>
    </source>
</evidence>
<evidence type="ECO:0000269" key="6">
    <source>
    </source>
</evidence>
<evidence type="ECO:0000269" key="7">
    <source>
    </source>
</evidence>
<evidence type="ECO:0000269" key="8">
    <source>
    </source>
</evidence>
<evidence type="ECO:0000269" key="9">
    <source>
    </source>
</evidence>
<evidence type="ECO:0000269" key="10">
    <source>
    </source>
</evidence>
<evidence type="ECO:0000269" key="11">
    <source>
    </source>
</evidence>
<evidence type="ECO:0000303" key="12">
    <source>
    </source>
</evidence>
<evidence type="ECO:0000303" key="13">
    <source>
    </source>
</evidence>
<evidence type="ECO:0000305" key="14"/>
<evidence type="ECO:0000312" key="15">
    <source>
        <dbReference type="EMBL" id="AAU26539.1"/>
    </source>
</evidence>
<evidence type="ECO:0007744" key="16">
    <source>
        <dbReference type="PDB" id="5X1E"/>
    </source>
</evidence>
<evidence type="ECO:0007744" key="17">
    <source>
        <dbReference type="PDB" id="5X90"/>
    </source>
</evidence>
<evidence type="ECO:0007744" key="18">
    <source>
        <dbReference type="PDB" id="5XNB"/>
    </source>
</evidence>
<evidence type="ECO:0007744" key="19">
    <source>
        <dbReference type="PDB" id="7BWK"/>
    </source>
</evidence>
<evidence type="ECO:0007829" key="20">
    <source>
        <dbReference type="PDB" id="5X1E"/>
    </source>
</evidence>
<organism>
    <name type="scientific">Legionella pneumophila subsp. pneumophila (strain Philadelphia 1 / ATCC 33152 / DSM 7513)</name>
    <dbReference type="NCBI Taxonomy" id="272624"/>
    <lineage>
        <taxon>Bacteria</taxon>
        <taxon>Pseudomonadati</taxon>
        <taxon>Pseudomonadota</taxon>
        <taxon>Gammaproteobacteria</taxon>
        <taxon>Legionellales</taxon>
        <taxon>Legionellaceae</taxon>
        <taxon>Legionella</taxon>
    </lineage>
</organism>
<gene>
    <name evidence="12" type="primary">icmS</name>
    <name evidence="15" type="ordered locus">lpg0442</name>
</gene>
<name>ICMS_LEGPH</name>
<proteinExistence type="evidence at protein level"/>